<reference key="1">
    <citation type="journal article" date="2005" name="Science">
        <title>The transcriptional landscape of the mammalian genome.</title>
        <authorList>
            <person name="Carninci P."/>
            <person name="Kasukawa T."/>
            <person name="Katayama S."/>
            <person name="Gough J."/>
            <person name="Frith M.C."/>
            <person name="Maeda N."/>
            <person name="Oyama R."/>
            <person name="Ravasi T."/>
            <person name="Lenhard B."/>
            <person name="Wells C."/>
            <person name="Kodzius R."/>
            <person name="Shimokawa K."/>
            <person name="Bajic V.B."/>
            <person name="Brenner S.E."/>
            <person name="Batalov S."/>
            <person name="Forrest A.R."/>
            <person name="Zavolan M."/>
            <person name="Davis M.J."/>
            <person name="Wilming L.G."/>
            <person name="Aidinis V."/>
            <person name="Allen J.E."/>
            <person name="Ambesi-Impiombato A."/>
            <person name="Apweiler R."/>
            <person name="Aturaliya R.N."/>
            <person name="Bailey T.L."/>
            <person name="Bansal M."/>
            <person name="Baxter L."/>
            <person name="Beisel K.W."/>
            <person name="Bersano T."/>
            <person name="Bono H."/>
            <person name="Chalk A.M."/>
            <person name="Chiu K.P."/>
            <person name="Choudhary V."/>
            <person name="Christoffels A."/>
            <person name="Clutterbuck D.R."/>
            <person name="Crowe M.L."/>
            <person name="Dalla E."/>
            <person name="Dalrymple B.P."/>
            <person name="de Bono B."/>
            <person name="Della Gatta G."/>
            <person name="di Bernardo D."/>
            <person name="Down T."/>
            <person name="Engstrom P."/>
            <person name="Fagiolini M."/>
            <person name="Faulkner G."/>
            <person name="Fletcher C.F."/>
            <person name="Fukushima T."/>
            <person name="Furuno M."/>
            <person name="Futaki S."/>
            <person name="Gariboldi M."/>
            <person name="Georgii-Hemming P."/>
            <person name="Gingeras T.R."/>
            <person name="Gojobori T."/>
            <person name="Green R.E."/>
            <person name="Gustincich S."/>
            <person name="Harbers M."/>
            <person name="Hayashi Y."/>
            <person name="Hensch T.K."/>
            <person name="Hirokawa N."/>
            <person name="Hill D."/>
            <person name="Huminiecki L."/>
            <person name="Iacono M."/>
            <person name="Ikeo K."/>
            <person name="Iwama A."/>
            <person name="Ishikawa T."/>
            <person name="Jakt M."/>
            <person name="Kanapin A."/>
            <person name="Katoh M."/>
            <person name="Kawasawa Y."/>
            <person name="Kelso J."/>
            <person name="Kitamura H."/>
            <person name="Kitano H."/>
            <person name="Kollias G."/>
            <person name="Krishnan S.P."/>
            <person name="Kruger A."/>
            <person name="Kummerfeld S.K."/>
            <person name="Kurochkin I.V."/>
            <person name="Lareau L.F."/>
            <person name="Lazarevic D."/>
            <person name="Lipovich L."/>
            <person name="Liu J."/>
            <person name="Liuni S."/>
            <person name="McWilliam S."/>
            <person name="Madan Babu M."/>
            <person name="Madera M."/>
            <person name="Marchionni L."/>
            <person name="Matsuda H."/>
            <person name="Matsuzawa S."/>
            <person name="Miki H."/>
            <person name="Mignone F."/>
            <person name="Miyake S."/>
            <person name="Morris K."/>
            <person name="Mottagui-Tabar S."/>
            <person name="Mulder N."/>
            <person name="Nakano N."/>
            <person name="Nakauchi H."/>
            <person name="Ng P."/>
            <person name="Nilsson R."/>
            <person name="Nishiguchi S."/>
            <person name="Nishikawa S."/>
            <person name="Nori F."/>
            <person name="Ohara O."/>
            <person name="Okazaki Y."/>
            <person name="Orlando V."/>
            <person name="Pang K.C."/>
            <person name="Pavan W.J."/>
            <person name="Pavesi G."/>
            <person name="Pesole G."/>
            <person name="Petrovsky N."/>
            <person name="Piazza S."/>
            <person name="Reed J."/>
            <person name="Reid J.F."/>
            <person name="Ring B.Z."/>
            <person name="Ringwald M."/>
            <person name="Rost B."/>
            <person name="Ruan Y."/>
            <person name="Salzberg S.L."/>
            <person name="Sandelin A."/>
            <person name="Schneider C."/>
            <person name="Schoenbach C."/>
            <person name="Sekiguchi K."/>
            <person name="Semple C.A."/>
            <person name="Seno S."/>
            <person name="Sessa L."/>
            <person name="Sheng Y."/>
            <person name="Shibata Y."/>
            <person name="Shimada H."/>
            <person name="Shimada K."/>
            <person name="Silva D."/>
            <person name="Sinclair B."/>
            <person name="Sperling S."/>
            <person name="Stupka E."/>
            <person name="Sugiura K."/>
            <person name="Sultana R."/>
            <person name="Takenaka Y."/>
            <person name="Taki K."/>
            <person name="Tammoja K."/>
            <person name="Tan S.L."/>
            <person name="Tang S."/>
            <person name="Taylor M.S."/>
            <person name="Tegner J."/>
            <person name="Teichmann S.A."/>
            <person name="Ueda H.R."/>
            <person name="van Nimwegen E."/>
            <person name="Verardo R."/>
            <person name="Wei C.L."/>
            <person name="Yagi K."/>
            <person name="Yamanishi H."/>
            <person name="Zabarovsky E."/>
            <person name="Zhu S."/>
            <person name="Zimmer A."/>
            <person name="Hide W."/>
            <person name="Bult C."/>
            <person name="Grimmond S.M."/>
            <person name="Teasdale R.D."/>
            <person name="Liu E.T."/>
            <person name="Brusic V."/>
            <person name="Quackenbush J."/>
            <person name="Wahlestedt C."/>
            <person name="Mattick J.S."/>
            <person name="Hume D.A."/>
            <person name="Kai C."/>
            <person name="Sasaki D."/>
            <person name="Tomaru Y."/>
            <person name="Fukuda S."/>
            <person name="Kanamori-Katayama M."/>
            <person name="Suzuki M."/>
            <person name="Aoki J."/>
            <person name="Arakawa T."/>
            <person name="Iida J."/>
            <person name="Imamura K."/>
            <person name="Itoh M."/>
            <person name="Kato T."/>
            <person name="Kawaji H."/>
            <person name="Kawagashira N."/>
            <person name="Kawashima T."/>
            <person name="Kojima M."/>
            <person name="Kondo S."/>
            <person name="Konno H."/>
            <person name="Nakano K."/>
            <person name="Ninomiya N."/>
            <person name="Nishio T."/>
            <person name="Okada M."/>
            <person name="Plessy C."/>
            <person name="Shibata K."/>
            <person name="Shiraki T."/>
            <person name="Suzuki S."/>
            <person name="Tagami M."/>
            <person name="Waki K."/>
            <person name="Watahiki A."/>
            <person name="Okamura-Oho Y."/>
            <person name="Suzuki H."/>
            <person name="Kawai J."/>
            <person name="Hayashizaki Y."/>
        </authorList>
    </citation>
    <scope>NUCLEOTIDE SEQUENCE [LARGE SCALE MRNA]</scope>
    <source>
        <strain>C57BL/6J</strain>
        <strain>NOD</strain>
        <tissue>Pancreas</tissue>
    </source>
</reference>
<reference key="2">
    <citation type="journal article" date="2004" name="Genome Res.">
        <title>The status, quality, and expansion of the NIH full-length cDNA project: the Mammalian Gene Collection (MGC).</title>
        <authorList>
            <consortium name="The MGC Project Team"/>
        </authorList>
    </citation>
    <scope>NUCLEOTIDE SEQUENCE [LARGE SCALE MRNA]</scope>
    <source>
        <strain>C57BL/6J</strain>
        <strain>FVB/N</strain>
        <strain>FVB/N-3</strain>
        <tissue>Brain</tissue>
        <tissue>Liver</tissue>
        <tissue>Mammary tumor</tissue>
        <tissue>Pancreas</tissue>
    </source>
</reference>
<reference key="3">
    <citation type="journal article" date="2010" name="Cell">
        <title>A tissue-specific atlas of mouse protein phosphorylation and expression.</title>
        <authorList>
            <person name="Huttlin E.L."/>
            <person name="Jedrychowski M.P."/>
            <person name="Elias J.E."/>
            <person name="Goswami T."/>
            <person name="Rad R."/>
            <person name="Beausoleil S.A."/>
            <person name="Villen J."/>
            <person name="Haas W."/>
            <person name="Sowa M.E."/>
            <person name="Gygi S.P."/>
        </authorList>
    </citation>
    <scope>IDENTIFICATION BY MASS SPECTROMETRY [LARGE SCALE ANALYSIS]</scope>
    <source>
        <tissue>Brain</tissue>
        <tissue>Kidney</tissue>
        <tissue>Liver</tissue>
        <tissue>Lung</tissue>
        <tissue>Pancreas</tissue>
        <tissue>Spleen</tissue>
        <tissue>Testis</tissue>
    </source>
</reference>
<comment type="function">
    <text evidence="1">Scaffold protein in the commander complex that is essential for endosomal recycling of transmembrane cargos; the commander complex is composed of the CCC subcomplex and the retriever subcomplex (By similarity). May modulate activity of cullin-RING E3 ubiquitin ligase (CRL) complexes (By similarity). May down-regulate activation of NF-kappa-B (By similarity). Modulates Na(+) transport in epithelial cells by regulation of apical cell surface expression of amiloride-sensitive sodium channel (ENaC) subunits (By similarity).</text>
</comment>
<comment type="subunit">
    <text evidence="1">Component of the commander complex consisting of the CCC subcomplex and the retriever subcomplex (By similarity). Component of the CCC (COMMD/CCDC22/CCDC93) subcomplex consisting of COMMD1, COMMD2, COMMD3, COMMD4, COMMD5, COMMD6, COMMD7, COMMD8, COMMD9, COMMD10, CCDC22 and CCDC93; within the complex forms a heterodimer with COMMD7 (By similarity). Interacts with RELB and NFKB1/p105 (By similarity). Interacts with CCDC22, CCDC93, SCNN1B, CUL1 (By similarity).</text>
</comment>
<comment type="subcellular location">
    <subcellularLocation>
        <location evidence="1">Nucleus</location>
    </subcellularLocation>
    <subcellularLocation>
        <location evidence="1">Cytoplasmic vesicle</location>
    </subcellularLocation>
</comment>
<comment type="similarity">
    <text evidence="3">Belongs to the COMM domain-containing protein 9 family.</text>
</comment>
<comment type="sequence caution" evidence="3">
    <conflict type="erroneous initiation">
        <sequence resource="EMBL-CDS" id="AAH30374"/>
    </conflict>
</comment>
<organism>
    <name type="scientific">Mus musculus</name>
    <name type="common">Mouse</name>
    <dbReference type="NCBI Taxonomy" id="10090"/>
    <lineage>
        <taxon>Eukaryota</taxon>
        <taxon>Metazoa</taxon>
        <taxon>Chordata</taxon>
        <taxon>Craniata</taxon>
        <taxon>Vertebrata</taxon>
        <taxon>Euteleostomi</taxon>
        <taxon>Mammalia</taxon>
        <taxon>Eutheria</taxon>
        <taxon>Euarchontoglires</taxon>
        <taxon>Glires</taxon>
        <taxon>Rodentia</taxon>
        <taxon>Myomorpha</taxon>
        <taxon>Muroidea</taxon>
        <taxon>Muridae</taxon>
        <taxon>Murinae</taxon>
        <taxon>Mus</taxon>
        <taxon>Mus</taxon>
    </lineage>
</organism>
<protein>
    <recommendedName>
        <fullName>COMM domain-containing protein 9</fullName>
    </recommendedName>
</protein>
<name>COMD9_MOUSE</name>
<gene>
    <name type="primary">Commd9</name>
</gene>
<accession>Q8K2Q0</accession>
<accession>Q3U3J2</accession>
<accession>Q7TNP5</accession>
<accession>Q811K2</accession>
<accession>Q9D8V8</accession>
<dbReference type="EMBL" id="AK007640">
    <property type="protein sequence ID" value="BAB25155.1"/>
    <property type="molecule type" value="mRNA"/>
</dbReference>
<dbReference type="EMBL" id="AK154731">
    <property type="protein sequence ID" value="BAE32794.1"/>
    <property type="molecule type" value="mRNA"/>
</dbReference>
<dbReference type="EMBL" id="BC030374">
    <property type="protein sequence ID" value="AAH30374.1"/>
    <property type="status" value="ALT_INIT"/>
    <property type="molecule type" value="mRNA"/>
</dbReference>
<dbReference type="EMBL" id="BC043684">
    <property type="protein sequence ID" value="AAH43684.1"/>
    <property type="molecule type" value="mRNA"/>
</dbReference>
<dbReference type="EMBL" id="BC056201">
    <property type="protein sequence ID" value="AAH56201.1"/>
    <property type="molecule type" value="mRNA"/>
</dbReference>
<dbReference type="EMBL" id="BC060058">
    <property type="protein sequence ID" value="AAH60058.1"/>
    <property type="molecule type" value="mRNA"/>
</dbReference>
<dbReference type="CCDS" id="CCDS16465.1"/>
<dbReference type="RefSeq" id="NP_083911.1">
    <property type="nucleotide sequence ID" value="NM_029635.3"/>
</dbReference>
<dbReference type="SMR" id="Q8K2Q0"/>
<dbReference type="FunCoup" id="Q8K2Q0">
    <property type="interactions" value="3110"/>
</dbReference>
<dbReference type="STRING" id="10090.ENSMUSP00000028584"/>
<dbReference type="iPTMnet" id="Q8K2Q0"/>
<dbReference type="PhosphoSitePlus" id="Q8K2Q0"/>
<dbReference type="SwissPalm" id="Q8K2Q0"/>
<dbReference type="jPOST" id="Q8K2Q0"/>
<dbReference type="PaxDb" id="10090-ENSMUSP00000028584"/>
<dbReference type="PeptideAtlas" id="Q8K2Q0"/>
<dbReference type="ProteomicsDB" id="285247"/>
<dbReference type="Pumba" id="Q8K2Q0"/>
<dbReference type="Antibodypedia" id="2123">
    <property type="antibodies" value="163 antibodies from 20 providers"/>
</dbReference>
<dbReference type="DNASU" id="76501"/>
<dbReference type="Ensembl" id="ENSMUST00000028584.8">
    <property type="protein sequence ID" value="ENSMUSP00000028584.8"/>
    <property type="gene ID" value="ENSMUSG00000027163.14"/>
</dbReference>
<dbReference type="GeneID" id="76501"/>
<dbReference type="KEGG" id="mmu:76501"/>
<dbReference type="UCSC" id="uc008lhq.1">
    <property type="organism name" value="mouse"/>
</dbReference>
<dbReference type="AGR" id="MGI:1923751"/>
<dbReference type="CTD" id="29099"/>
<dbReference type="MGI" id="MGI:1923751">
    <property type="gene designation" value="Commd9"/>
</dbReference>
<dbReference type="VEuPathDB" id="HostDB:ENSMUSG00000027163"/>
<dbReference type="eggNOG" id="ENOG502RHPY">
    <property type="taxonomic scope" value="Eukaryota"/>
</dbReference>
<dbReference type="GeneTree" id="ENSGT00390000006218"/>
<dbReference type="HOGENOM" id="CLU_118635_0_0_1"/>
<dbReference type="InParanoid" id="Q8K2Q0"/>
<dbReference type="OMA" id="SHHVLFY"/>
<dbReference type="OrthoDB" id="48362at9989"/>
<dbReference type="PhylomeDB" id="Q8K2Q0"/>
<dbReference type="TreeFam" id="TF323880"/>
<dbReference type="Reactome" id="R-MMU-6798695">
    <property type="pathway name" value="Neutrophil degranulation"/>
</dbReference>
<dbReference type="Reactome" id="R-MMU-8951664">
    <property type="pathway name" value="Neddylation"/>
</dbReference>
<dbReference type="BioGRID-ORCS" id="76501">
    <property type="hits" value="2 hits in 76 CRISPR screens"/>
</dbReference>
<dbReference type="ChiTaRS" id="Commd9">
    <property type="organism name" value="mouse"/>
</dbReference>
<dbReference type="PRO" id="PR:Q8K2Q0"/>
<dbReference type="Proteomes" id="UP000000589">
    <property type="component" value="Chromosome 2"/>
</dbReference>
<dbReference type="RNAct" id="Q8K2Q0">
    <property type="molecule type" value="protein"/>
</dbReference>
<dbReference type="Bgee" id="ENSMUSG00000027163">
    <property type="expression patterns" value="Expressed in yolk sac and 260 other cell types or tissues"/>
</dbReference>
<dbReference type="GO" id="GO:0031410">
    <property type="term" value="C:cytoplasmic vesicle"/>
    <property type="evidence" value="ECO:0007669"/>
    <property type="project" value="UniProtKB-KW"/>
</dbReference>
<dbReference type="GO" id="GO:0005829">
    <property type="term" value="C:cytosol"/>
    <property type="evidence" value="ECO:0007669"/>
    <property type="project" value="Ensembl"/>
</dbReference>
<dbReference type="GO" id="GO:0005794">
    <property type="term" value="C:Golgi apparatus"/>
    <property type="evidence" value="ECO:0007669"/>
    <property type="project" value="Ensembl"/>
</dbReference>
<dbReference type="GO" id="GO:0005654">
    <property type="term" value="C:nucleoplasm"/>
    <property type="evidence" value="ECO:0007669"/>
    <property type="project" value="Ensembl"/>
</dbReference>
<dbReference type="GO" id="GO:0042632">
    <property type="term" value="P:cholesterol homeostasis"/>
    <property type="evidence" value="ECO:0000315"/>
    <property type="project" value="MGI"/>
</dbReference>
<dbReference type="GO" id="GO:0006814">
    <property type="term" value="P:sodium ion transport"/>
    <property type="evidence" value="ECO:0007669"/>
    <property type="project" value="UniProtKB-KW"/>
</dbReference>
<dbReference type="CDD" id="cd04757">
    <property type="entry name" value="Commd9"/>
    <property type="match status" value="1"/>
</dbReference>
<dbReference type="InterPro" id="IPR017920">
    <property type="entry name" value="COMM"/>
</dbReference>
<dbReference type="InterPro" id="IPR037360">
    <property type="entry name" value="COMMD9"/>
</dbReference>
<dbReference type="InterPro" id="IPR048676">
    <property type="entry name" value="COMMD9_N"/>
</dbReference>
<dbReference type="PANTHER" id="PTHR15663">
    <property type="entry name" value="COMM DOMAIN-CONTAINING PROTEIN 9"/>
    <property type="match status" value="1"/>
</dbReference>
<dbReference type="PANTHER" id="PTHR15663:SF4">
    <property type="entry name" value="COMM DOMAIN-CONTAINING PROTEIN 9"/>
    <property type="match status" value="1"/>
</dbReference>
<dbReference type="Pfam" id="PF07258">
    <property type="entry name" value="COMM_domain"/>
    <property type="match status" value="1"/>
</dbReference>
<dbReference type="Pfam" id="PF20923">
    <property type="entry name" value="COMMD9_HN"/>
    <property type="match status" value="1"/>
</dbReference>
<dbReference type="PROSITE" id="PS51269">
    <property type="entry name" value="COMM"/>
    <property type="match status" value="1"/>
</dbReference>
<proteinExistence type="evidence at protein level"/>
<evidence type="ECO:0000250" key="1">
    <source>
        <dbReference type="UniProtKB" id="Q9P000"/>
    </source>
</evidence>
<evidence type="ECO:0000255" key="2">
    <source>
        <dbReference type="PROSITE-ProRule" id="PRU00602"/>
    </source>
</evidence>
<evidence type="ECO:0000305" key="3"/>
<feature type="initiator methionine" description="Removed" evidence="1">
    <location>
        <position position="1"/>
    </location>
</feature>
<feature type="chain" id="PRO_0000077404" description="COMM domain-containing protein 9">
    <location>
        <begin position="2"/>
        <end position="198"/>
    </location>
</feature>
<feature type="domain" description="COMM" evidence="2">
    <location>
        <begin position="122"/>
        <end position="196"/>
    </location>
</feature>
<feature type="modified residue" description="N-acetylalanine" evidence="1">
    <location>
        <position position="2"/>
    </location>
</feature>
<feature type="sequence conflict" description="In Ref. 2; AAH56201." evidence="3" ref="2">
    <original>KDVV</original>
    <variation>PTRP</variation>
    <location>
        <begin position="21"/>
        <end position="24"/>
    </location>
</feature>
<keyword id="KW-0007">Acetylation</keyword>
<keyword id="KW-0968">Cytoplasmic vesicle</keyword>
<keyword id="KW-0406">Ion transport</keyword>
<keyword id="KW-0539">Nucleus</keyword>
<keyword id="KW-1185">Reference proteome</keyword>
<keyword id="KW-0915">Sodium</keyword>
<keyword id="KW-0739">Sodium transport</keyword>
<keyword id="KW-0804">Transcription</keyword>
<keyword id="KW-0805">Transcription regulation</keyword>
<keyword id="KW-0813">Transport</keyword>
<keyword id="KW-0833">Ubl conjugation pathway</keyword>
<sequence>MAALTAEHFVALQSLLKASSKDVVRQLCQESFSSSCLDSESLLDKTCSSLSVPQGEAAQLLQALHHFTRLVAFRDLSSAEAILALFPENFHQNLKNLLTKIIVEHISTWRAEAQANQISLPRLVDLDWRVDIKTSSDNISRMAVPTCLLQMKIQEDPSLCGEKPSISAVTMELSKETLDTMLDGLGRIRDQLSAVANK</sequence>